<feature type="chain" id="PRO_0000110344" description="NAD-dependent protein deacylase">
    <location>
        <begin position="1"/>
        <end position="239"/>
    </location>
</feature>
<feature type="domain" description="Deacetylase sirtuin-type" evidence="2">
    <location>
        <begin position="1"/>
        <end position="239"/>
    </location>
</feature>
<feature type="active site" description="Proton acceptor" evidence="1">
    <location>
        <position position="111"/>
    </location>
</feature>
<feature type="binding site" evidence="1">
    <location>
        <begin position="8"/>
        <end position="27"/>
    </location>
    <ligand>
        <name>NAD(+)</name>
        <dbReference type="ChEBI" id="CHEBI:57540"/>
    </ligand>
</feature>
<feature type="binding site" evidence="1">
    <location>
        <position position="52"/>
    </location>
    <ligand>
        <name>substrate</name>
    </ligand>
</feature>
<feature type="binding site" evidence="1">
    <location>
        <position position="55"/>
    </location>
    <ligand>
        <name>substrate</name>
    </ligand>
</feature>
<feature type="binding site" evidence="1">
    <location>
        <begin position="93"/>
        <end position="96"/>
    </location>
    <ligand>
        <name>NAD(+)</name>
        <dbReference type="ChEBI" id="CHEBI:57540"/>
    </ligand>
</feature>
<feature type="binding site" evidence="1">
    <location>
        <begin position="182"/>
        <end position="184"/>
    </location>
    <ligand>
        <name>NAD(+)</name>
        <dbReference type="ChEBI" id="CHEBI:57540"/>
    </ligand>
</feature>
<feature type="binding site" evidence="1">
    <location>
        <begin position="207"/>
        <end position="209"/>
    </location>
    <ligand>
        <name>NAD(+)</name>
        <dbReference type="ChEBI" id="CHEBI:57540"/>
    </ligand>
</feature>
<feature type="binding site" evidence="1">
    <location>
        <position position="225"/>
    </location>
    <ligand>
        <name>NAD(+)</name>
        <dbReference type="ChEBI" id="CHEBI:57540"/>
    </ligand>
</feature>
<proteinExistence type="inferred from homology"/>
<protein>
    <recommendedName>
        <fullName evidence="1">NAD-dependent protein deacylase</fullName>
        <ecNumber evidence="1">2.3.1.286</ecNumber>
    </recommendedName>
    <alternativeName>
        <fullName evidence="1">Regulatory protein SIR2 homolog</fullName>
    </alternativeName>
</protein>
<keyword id="KW-0963">Cytoplasm</keyword>
<keyword id="KW-0520">NAD</keyword>
<keyword id="KW-1185">Reference proteome</keyword>
<keyword id="KW-0808">Transferase</keyword>
<evidence type="ECO:0000255" key="1">
    <source>
        <dbReference type="HAMAP-Rule" id="MF_01121"/>
    </source>
</evidence>
<evidence type="ECO:0000255" key="2">
    <source>
        <dbReference type="PROSITE-ProRule" id="PRU00236"/>
    </source>
</evidence>
<dbReference type="EC" id="2.3.1.286" evidence="1"/>
<dbReference type="EMBL" id="BX294147">
    <property type="protein sequence ID" value="CAD78623.1"/>
    <property type="molecule type" value="Genomic_DNA"/>
</dbReference>
<dbReference type="RefSeq" id="NP_868345.1">
    <property type="nucleotide sequence ID" value="NC_005027.1"/>
</dbReference>
<dbReference type="RefSeq" id="WP_011121842.1">
    <property type="nucleotide sequence ID" value="NC_005027.1"/>
</dbReference>
<dbReference type="SMR" id="Q7UFQ9"/>
<dbReference type="FunCoup" id="Q7UFQ9">
    <property type="interactions" value="381"/>
</dbReference>
<dbReference type="STRING" id="243090.RB8404"/>
<dbReference type="EnsemblBacteria" id="CAD78623">
    <property type="protein sequence ID" value="CAD78623"/>
    <property type="gene ID" value="RB8404"/>
</dbReference>
<dbReference type="KEGG" id="rba:RB8404"/>
<dbReference type="PATRIC" id="fig|243090.15.peg.4048"/>
<dbReference type="eggNOG" id="COG0846">
    <property type="taxonomic scope" value="Bacteria"/>
</dbReference>
<dbReference type="HOGENOM" id="CLU_023643_3_1_0"/>
<dbReference type="InParanoid" id="Q7UFQ9"/>
<dbReference type="OrthoDB" id="9800582at2"/>
<dbReference type="Proteomes" id="UP000001025">
    <property type="component" value="Chromosome"/>
</dbReference>
<dbReference type="GO" id="GO:0005737">
    <property type="term" value="C:cytoplasm"/>
    <property type="evidence" value="ECO:0007669"/>
    <property type="project" value="UniProtKB-SubCell"/>
</dbReference>
<dbReference type="GO" id="GO:0017136">
    <property type="term" value="F:histone deacetylase activity, NAD-dependent"/>
    <property type="evidence" value="ECO:0000318"/>
    <property type="project" value="GO_Central"/>
</dbReference>
<dbReference type="GO" id="GO:0070403">
    <property type="term" value="F:NAD+ binding"/>
    <property type="evidence" value="ECO:0000318"/>
    <property type="project" value="GO_Central"/>
</dbReference>
<dbReference type="GO" id="GO:0036054">
    <property type="term" value="F:protein-malonyllysine demalonylase activity"/>
    <property type="evidence" value="ECO:0007669"/>
    <property type="project" value="InterPro"/>
</dbReference>
<dbReference type="GO" id="GO:0036055">
    <property type="term" value="F:protein-succinyllysine desuccinylase activity"/>
    <property type="evidence" value="ECO:0007669"/>
    <property type="project" value="UniProtKB-UniRule"/>
</dbReference>
<dbReference type="CDD" id="cd01412">
    <property type="entry name" value="SIRT5_Af1_CobB"/>
    <property type="match status" value="1"/>
</dbReference>
<dbReference type="Gene3D" id="3.30.1600.10">
    <property type="entry name" value="SIR2/SIRT2 'Small Domain"/>
    <property type="match status" value="1"/>
</dbReference>
<dbReference type="Gene3D" id="3.40.50.1220">
    <property type="entry name" value="TPP-binding domain"/>
    <property type="match status" value="1"/>
</dbReference>
<dbReference type="HAMAP" id="MF_01121">
    <property type="entry name" value="Sirtuin_ClassIII"/>
    <property type="match status" value="1"/>
</dbReference>
<dbReference type="InterPro" id="IPR029035">
    <property type="entry name" value="DHS-like_NAD/FAD-binding_dom"/>
</dbReference>
<dbReference type="InterPro" id="IPR050134">
    <property type="entry name" value="NAD-dep_sirtuin_deacylases"/>
</dbReference>
<dbReference type="InterPro" id="IPR003000">
    <property type="entry name" value="Sirtuin"/>
</dbReference>
<dbReference type="InterPro" id="IPR026591">
    <property type="entry name" value="Sirtuin_cat_small_dom_sf"/>
</dbReference>
<dbReference type="InterPro" id="IPR027546">
    <property type="entry name" value="Sirtuin_class_III"/>
</dbReference>
<dbReference type="InterPro" id="IPR026590">
    <property type="entry name" value="Ssirtuin_cat_dom"/>
</dbReference>
<dbReference type="PANTHER" id="PTHR11085:SF4">
    <property type="entry name" value="NAD-DEPENDENT PROTEIN DEACYLASE"/>
    <property type="match status" value="1"/>
</dbReference>
<dbReference type="PANTHER" id="PTHR11085">
    <property type="entry name" value="NAD-DEPENDENT PROTEIN DEACYLASE SIRTUIN-5, MITOCHONDRIAL-RELATED"/>
    <property type="match status" value="1"/>
</dbReference>
<dbReference type="Pfam" id="PF02146">
    <property type="entry name" value="SIR2"/>
    <property type="match status" value="1"/>
</dbReference>
<dbReference type="SUPFAM" id="SSF52467">
    <property type="entry name" value="DHS-like NAD/FAD-binding domain"/>
    <property type="match status" value="1"/>
</dbReference>
<dbReference type="PROSITE" id="PS50305">
    <property type="entry name" value="SIRTUIN"/>
    <property type="match status" value="1"/>
</dbReference>
<gene>
    <name evidence="1" type="primary">cobB</name>
    <name type="ordered locus">RB8404</name>
</gene>
<sequence length="239" mass="26142">MNVLILTGAGISAESGIPTFRDANGLWEGHAVEEVATPQGFARNPNLVHEFYNQRRRALLNPEIQPNAAHVALADFEREHLENGRGDFLLVTQNIDNLHQRAGSQNVLAMHGQLLQVRCVYSEEIFDWTGDLSVDTPHPEAPDDDSMRGCLRPNVVWFGEMPIGLTQIEKAATKADLFIAIGTSGVVYPAAGIVAQTPPHCRRIEVNLDDTPASSAFDETIRGAASVEIPKLLNHFSAM</sequence>
<organism>
    <name type="scientific">Rhodopirellula baltica (strain DSM 10527 / NCIMB 13988 / SH1)</name>
    <dbReference type="NCBI Taxonomy" id="243090"/>
    <lineage>
        <taxon>Bacteria</taxon>
        <taxon>Pseudomonadati</taxon>
        <taxon>Planctomycetota</taxon>
        <taxon>Planctomycetia</taxon>
        <taxon>Pirellulales</taxon>
        <taxon>Pirellulaceae</taxon>
        <taxon>Rhodopirellula</taxon>
    </lineage>
</organism>
<comment type="function">
    <text evidence="1">NAD-dependent lysine deacetylase and desuccinylase that specifically removes acetyl and succinyl groups on target proteins. Modulates the activities of several proteins which are inactive in their acylated form.</text>
</comment>
<comment type="catalytic activity">
    <reaction evidence="1">
        <text>N(6)-acetyl-L-lysyl-[protein] + NAD(+) + H2O = 2''-O-acetyl-ADP-D-ribose + nicotinamide + L-lysyl-[protein]</text>
        <dbReference type="Rhea" id="RHEA:43636"/>
        <dbReference type="Rhea" id="RHEA-COMP:9752"/>
        <dbReference type="Rhea" id="RHEA-COMP:10731"/>
        <dbReference type="ChEBI" id="CHEBI:15377"/>
        <dbReference type="ChEBI" id="CHEBI:17154"/>
        <dbReference type="ChEBI" id="CHEBI:29969"/>
        <dbReference type="ChEBI" id="CHEBI:57540"/>
        <dbReference type="ChEBI" id="CHEBI:61930"/>
        <dbReference type="ChEBI" id="CHEBI:83767"/>
        <dbReference type="EC" id="2.3.1.286"/>
    </reaction>
</comment>
<comment type="catalytic activity">
    <reaction evidence="1">
        <text>N(6)-succinyl-L-lysyl-[protein] + NAD(+) + H2O = 2''-O-succinyl-ADP-D-ribose + nicotinamide + L-lysyl-[protein]</text>
        <dbReference type="Rhea" id="RHEA:47668"/>
        <dbReference type="Rhea" id="RHEA-COMP:9752"/>
        <dbReference type="Rhea" id="RHEA-COMP:11877"/>
        <dbReference type="ChEBI" id="CHEBI:15377"/>
        <dbReference type="ChEBI" id="CHEBI:17154"/>
        <dbReference type="ChEBI" id="CHEBI:29969"/>
        <dbReference type="ChEBI" id="CHEBI:57540"/>
        <dbReference type="ChEBI" id="CHEBI:87830"/>
        <dbReference type="ChEBI" id="CHEBI:87832"/>
    </reaction>
</comment>
<comment type="subcellular location">
    <subcellularLocation>
        <location evidence="1">Cytoplasm</location>
    </subcellularLocation>
</comment>
<comment type="domain">
    <text evidence="1">2 residues (Tyr-52 and Arg-55) present in a large hydrophobic pocket are probably involved in substrate specificity. They are important for desuccinylation activity, but dispensable for deacetylation activity.</text>
</comment>
<comment type="similarity">
    <text evidence="1">Belongs to the sirtuin family. Class III subfamily.</text>
</comment>
<name>NPD_RHOBA</name>
<accession>Q7UFQ9</accession>
<reference key="1">
    <citation type="journal article" date="2003" name="Proc. Natl. Acad. Sci. U.S.A.">
        <title>Complete genome sequence of the marine planctomycete Pirellula sp. strain 1.</title>
        <authorList>
            <person name="Gloeckner F.O."/>
            <person name="Kube M."/>
            <person name="Bauer M."/>
            <person name="Teeling H."/>
            <person name="Lombardot T."/>
            <person name="Ludwig W."/>
            <person name="Gade D."/>
            <person name="Beck A."/>
            <person name="Borzym K."/>
            <person name="Heitmann K."/>
            <person name="Rabus R."/>
            <person name="Schlesner H."/>
            <person name="Amann R."/>
            <person name="Reinhardt R."/>
        </authorList>
    </citation>
    <scope>NUCLEOTIDE SEQUENCE [LARGE SCALE GENOMIC DNA]</scope>
    <source>
        <strain>DSM 10527 / NCIMB 13988 / SH1</strain>
    </source>
</reference>